<evidence type="ECO:0000250" key="1"/>
<evidence type="ECO:0000250" key="2">
    <source>
        <dbReference type="UniProtKB" id="O81126"/>
    </source>
</evidence>
<evidence type="ECO:0000250" key="3">
    <source>
        <dbReference type="UniProtKB" id="P92964"/>
    </source>
</evidence>
<evidence type="ECO:0000250" key="4">
    <source>
        <dbReference type="UniProtKB" id="P92965"/>
    </source>
</evidence>
<evidence type="ECO:0000250" key="5">
    <source>
        <dbReference type="UniProtKB" id="P92966"/>
    </source>
</evidence>
<evidence type="ECO:0000250" key="6">
    <source>
        <dbReference type="UniProtKB" id="Q8VYA5"/>
    </source>
</evidence>
<evidence type="ECO:0000250" key="7">
    <source>
        <dbReference type="UniProtKB" id="Q9FYB7"/>
    </source>
</evidence>
<evidence type="ECO:0000255" key="8">
    <source>
        <dbReference type="PROSITE-ProRule" id="PRU00047"/>
    </source>
</evidence>
<evidence type="ECO:0000255" key="9">
    <source>
        <dbReference type="PROSITE-ProRule" id="PRU00176"/>
    </source>
</evidence>
<evidence type="ECO:0000256" key="10">
    <source>
        <dbReference type="SAM" id="MobiDB-lite"/>
    </source>
</evidence>
<evidence type="ECO:0000305" key="11"/>
<evidence type="ECO:0007744" key="12">
    <source>
    </source>
</evidence>
<evidence type="ECO:0007744" key="13">
    <source>
    </source>
</evidence>
<proteinExistence type="evidence at protein level"/>
<name>RZ22A_ARATH</name>
<keyword id="KW-0479">Metal-binding</keyword>
<keyword id="KW-0507">mRNA processing</keyword>
<keyword id="KW-0508">mRNA splicing</keyword>
<keyword id="KW-0539">Nucleus</keyword>
<keyword id="KW-0597">Phosphoprotein</keyword>
<keyword id="KW-1185">Reference proteome</keyword>
<keyword id="KW-0747">Spliceosome</keyword>
<keyword id="KW-0862">Zinc</keyword>
<keyword id="KW-0863">Zinc-finger</keyword>
<comment type="function">
    <text>Probably involved in intron recognition and spliceosome assembly.</text>
</comment>
<comment type="subunit">
    <text>Component of the spliceosome.</text>
</comment>
<comment type="interaction">
    <interactant intactId="EBI-4433459">
        <id>Q9SJA6</id>
    </interactant>
    <interactant intactId="EBI-927172">
        <id>O81127</id>
        <label>RSZ21</label>
    </interactant>
    <organismsDiffer>false</organismsDiffer>
    <experiments>3</experiments>
</comment>
<comment type="subcellular location">
    <subcellularLocation>
        <location evidence="2">Nucleus</location>
    </subcellularLocation>
</comment>
<comment type="PTM">
    <text evidence="1">Extensively phosphorylated on serine residues in the RS domain.</text>
</comment>
<comment type="similarity">
    <text evidence="11">Belongs to the splicing factor SR family. RSZ subfamily.</text>
</comment>
<reference key="1">
    <citation type="journal article" date="1999" name="Nature">
        <title>Sequence and analysis of chromosome 2 of the plant Arabidopsis thaliana.</title>
        <authorList>
            <person name="Lin X."/>
            <person name="Kaul S."/>
            <person name="Rounsley S.D."/>
            <person name="Shea T.P."/>
            <person name="Benito M.-I."/>
            <person name="Town C.D."/>
            <person name="Fujii C.Y."/>
            <person name="Mason T.M."/>
            <person name="Bowman C.L."/>
            <person name="Barnstead M.E."/>
            <person name="Feldblyum T.V."/>
            <person name="Buell C.R."/>
            <person name="Ketchum K.A."/>
            <person name="Lee J.J."/>
            <person name="Ronning C.M."/>
            <person name="Koo H.L."/>
            <person name="Moffat K.S."/>
            <person name="Cronin L.A."/>
            <person name="Shen M."/>
            <person name="Pai G."/>
            <person name="Van Aken S."/>
            <person name="Umayam L."/>
            <person name="Tallon L.J."/>
            <person name="Gill J.E."/>
            <person name="Adams M.D."/>
            <person name="Carrera A.J."/>
            <person name="Creasy T.H."/>
            <person name="Goodman H.M."/>
            <person name="Somerville C.R."/>
            <person name="Copenhaver G.P."/>
            <person name="Preuss D."/>
            <person name="Nierman W.C."/>
            <person name="White O."/>
            <person name="Eisen J.A."/>
            <person name="Salzberg S.L."/>
            <person name="Fraser C.M."/>
            <person name="Venter J.C."/>
        </authorList>
    </citation>
    <scope>NUCLEOTIDE SEQUENCE [LARGE SCALE GENOMIC DNA]</scope>
    <source>
        <strain>cv. Columbia</strain>
    </source>
</reference>
<reference key="2">
    <citation type="journal article" date="2017" name="Plant J.">
        <title>Araport11: a complete reannotation of the Arabidopsis thaliana reference genome.</title>
        <authorList>
            <person name="Cheng C.Y."/>
            <person name="Krishnakumar V."/>
            <person name="Chan A.P."/>
            <person name="Thibaud-Nissen F."/>
            <person name="Schobel S."/>
            <person name="Town C.D."/>
        </authorList>
    </citation>
    <scope>GENOME REANNOTATION</scope>
    <source>
        <strain>cv. Columbia</strain>
    </source>
</reference>
<reference key="3">
    <citation type="journal article" date="2002" name="Science">
        <title>Functional annotation of a full-length Arabidopsis cDNA collection.</title>
        <authorList>
            <person name="Seki M."/>
            <person name="Narusaka M."/>
            <person name="Kamiya A."/>
            <person name="Ishida J."/>
            <person name="Satou M."/>
            <person name="Sakurai T."/>
            <person name="Nakajima M."/>
            <person name="Enju A."/>
            <person name="Akiyama K."/>
            <person name="Oono Y."/>
            <person name="Muramatsu M."/>
            <person name="Hayashizaki Y."/>
            <person name="Kawai J."/>
            <person name="Carninci P."/>
            <person name="Itoh M."/>
            <person name="Ishii Y."/>
            <person name="Arakawa T."/>
            <person name="Shibata K."/>
            <person name="Shinagawa A."/>
            <person name="Shinozaki K."/>
        </authorList>
    </citation>
    <scope>NUCLEOTIDE SEQUENCE [LARGE SCALE MRNA]</scope>
    <source>
        <strain>cv. Columbia</strain>
    </source>
</reference>
<reference key="4">
    <citation type="journal article" date="2003" name="Science">
        <title>Empirical analysis of transcriptional activity in the Arabidopsis genome.</title>
        <authorList>
            <person name="Yamada K."/>
            <person name="Lim J."/>
            <person name="Dale J.M."/>
            <person name="Chen H."/>
            <person name="Shinn P."/>
            <person name="Palm C.J."/>
            <person name="Southwick A.M."/>
            <person name="Wu H.C."/>
            <person name="Kim C.J."/>
            <person name="Nguyen M."/>
            <person name="Pham P.K."/>
            <person name="Cheuk R.F."/>
            <person name="Karlin-Newmann G."/>
            <person name="Liu S.X."/>
            <person name="Lam B."/>
            <person name="Sakano H."/>
            <person name="Wu T."/>
            <person name="Yu G."/>
            <person name="Miranda M."/>
            <person name="Quach H.L."/>
            <person name="Tripp M."/>
            <person name="Chang C.H."/>
            <person name="Lee J.M."/>
            <person name="Toriumi M.J."/>
            <person name="Chan M.M."/>
            <person name="Tang C.C."/>
            <person name="Onodera C.S."/>
            <person name="Deng J.M."/>
            <person name="Akiyama K."/>
            <person name="Ansari Y."/>
            <person name="Arakawa T."/>
            <person name="Banh J."/>
            <person name="Banno F."/>
            <person name="Bowser L."/>
            <person name="Brooks S.Y."/>
            <person name="Carninci P."/>
            <person name="Chao Q."/>
            <person name="Choy N."/>
            <person name="Enju A."/>
            <person name="Goldsmith A.D."/>
            <person name="Gurjal M."/>
            <person name="Hansen N.F."/>
            <person name="Hayashizaki Y."/>
            <person name="Johnson-Hopson C."/>
            <person name="Hsuan V.W."/>
            <person name="Iida K."/>
            <person name="Karnes M."/>
            <person name="Khan S."/>
            <person name="Koesema E."/>
            <person name="Ishida J."/>
            <person name="Jiang P.X."/>
            <person name="Jones T."/>
            <person name="Kawai J."/>
            <person name="Kamiya A."/>
            <person name="Meyers C."/>
            <person name="Nakajima M."/>
            <person name="Narusaka M."/>
            <person name="Seki M."/>
            <person name="Sakurai T."/>
            <person name="Satou M."/>
            <person name="Tamse R."/>
            <person name="Vaysberg M."/>
            <person name="Wallender E.K."/>
            <person name="Wong C."/>
            <person name="Yamamura Y."/>
            <person name="Yuan S."/>
            <person name="Shinozaki K."/>
            <person name="Davis R.W."/>
            <person name="Theologis A."/>
            <person name="Ecker J.R."/>
        </authorList>
    </citation>
    <scope>NUCLEOTIDE SEQUENCE [LARGE SCALE MRNA]</scope>
    <source>
        <strain>cv. Columbia</strain>
    </source>
</reference>
<reference key="5">
    <citation type="journal article" date="2009" name="J. Proteomics">
        <title>Phosphoproteomic analysis of nuclei-enriched fractions from Arabidopsis thaliana.</title>
        <authorList>
            <person name="Jones A.M.E."/>
            <person name="MacLean D."/>
            <person name="Studholme D.J."/>
            <person name="Serna-Sanz A."/>
            <person name="Andreasson E."/>
            <person name="Rathjen J.P."/>
            <person name="Peck S.C."/>
        </authorList>
    </citation>
    <scope>PHOSPHORYLATION [LARGE SCALE ANALYSIS] AT SER-48</scope>
    <scope>IDENTIFICATION BY MASS SPECTROMETRY [LARGE SCALE ANALYSIS]</scope>
    <source>
        <strain>cv. Columbia</strain>
    </source>
</reference>
<reference key="6">
    <citation type="journal article" date="2009" name="Plant Physiol.">
        <title>Large-scale Arabidopsis phosphoproteome profiling reveals novel chloroplast kinase substrates and phosphorylation networks.</title>
        <authorList>
            <person name="Reiland S."/>
            <person name="Messerli G."/>
            <person name="Baerenfaller K."/>
            <person name="Gerrits B."/>
            <person name="Endler A."/>
            <person name="Grossmann J."/>
            <person name="Gruissem W."/>
            <person name="Baginsky S."/>
        </authorList>
    </citation>
    <scope>PHOSPHORYLATION [LARGE SCALE ANALYSIS] AT SER-170</scope>
    <scope>IDENTIFICATION BY MASS SPECTROMETRY [LARGE SCALE ANALYSIS]</scope>
</reference>
<reference key="7">
    <citation type="journal article" date="2010" name="Plant Cell">
        <title>Implementing a rational and consistent nomenclature for serine/arginine-rich protein splicing factors (SR proteins) in plants.</title>
        <authorList>
            <person name="Barta A."/>
            <person name="Kalyna M."/>
            <person name="Reddy A.S."/>
        </authorList>
    </citation>
    <scope>GENE FAMILY</scope>
    <scope>NOMENCLATURE</scope>
</reference>
<reference key="8">
    <citation type="journal article" date="2011" name="PLoS ONE">
        <title>Comparative analysis of serine/arginine-rich proteins across 27 eukaryotes: insights into sub-family classification and extent of alternative splicing.</title>
        <authorList>
            <person name="Richardson D.N."/>
            <person name="Rogers M.F."/>
            <person name="Labadorf A."/>
            <person name="Ben-Hur A."/>
            <person name="Guo H."/>
            <person name="Paterson A.H."/>
            <person name="Reddy A.S.N."/>
        </authorList>
    </citation>
    <scope>GENE FAMILY</scope>
</reference>
<accession>Q9SJA6</accession>
<sequence length="196" mass="21915">MSRVYVGNLDPRVTERELEDEFRSFGVIRSVWVARRPPGYAFLDFEDSRDARDAIREVDGKNGWRVEQSHNRGGGGGRGGGRGGGDGGRGRGGSDLKCYECGESGHFARECRSRGGSGGRRRSRSRSRSPPRYRKSPTYGGRRSYSPRARSPPPPRRRSPSPRGRNYSRSPPPYRARDEVPYANGNGLKDVRRSRS</sequence>
<feature type="chain" id="PRO_0000416993" description="Serine/arginine-rich splicing factor RSZ22A">
    <location>
        <begin position="1"/>
        <end position="196"/>
    </location>
</feature>
<feature type="domain" description="RRM" evidence="9">
    <location>
        <begin position="2"/>
        <end position="71"/>
    </location>
</feature>
<feature type="zinc finger region" description="CCHC-type" evidence="8">
    <location>
        <begin position="96"/>
        <end position="113"/>
    </location>
</feature>
<feature type="region of interest" description="Disordered" evidence="10">
    <location>
        <begin position="58"/>
        <end position="196"/>
    </location>
</feature>
<feature type="compositionally biased region" description="Basic and acidic residues" evidence="10">
    <location>
        <begin position="58"/>
        <end position="70"/>
    </location>
</feature>
<feature type="compositionally biased region" description="Gly residues" evidence="10">
    <location>
        <begin position="72"/>
        <end position="87"/>
    </location>
</feature>
<feature type="compositionally biased region" description="Basic and acidic residues" evidence="10">
    <location>
        <begin position="88"/>
        <end position="100"/>
    </location>
</feature>
<feature type="compositionally biased region" description="Basic residues" evidence="10">
    <location>
        <begin position="119"/>
        <end position="135"/>
    </location>
</feature>
<feature type="compositionally biased region" description="Low complexity" evidence="10">
    <location>
        <begin position="139"/>
        <end position="149"/>
    </location>
</feature>
<feature type="modified residue" description="Phosphoserine" evidence="12">
    <location>
        <position position="48"/>
    </location>
</feature>
<feature type="modified residue" description="Phosphoserine" evidence="3">
    <location>
        <position position="136"/>
    </location>
</feature>
<feature type="modified residue" description="Phosphoserine" evidence="4">
    <location>
        <position position="144"/>
    </location>
</feature>
<feature type="modified residue" description="Phosphoserine" evidence="6">
    <location>
        <position position="146"/>
    </location>
</feature>
<feature type="modified residue" description="Phosphoserine" evidence="3">
    <location>
        <position position="151"/>
    </location>
</feature>
<feature type="modified residue" description="Phosphoserine" evidence="5">
    <location>
        <position position="159"/>
    </location>
</feature>
<feature type="modified residue" description="Phosphoserine" evidence="13">
    <location>
        <position position="170"/>
    </location>
</feature>
<feature type="modified residue" description="Phosphoserine" evidence="7">
    <location>
        <position position="196"/>
    </location>
</feature>
<dbReference type="EMBL" id="AC006954">
    <property type="protein sequence ID" value="AAD23894.1"/>
    <property type="molecule type" value="Genomic_DNA"/>
</dbReference>
<dbReference type="EMBL" id="CP002685">
    <property type="protein sequence ID" value="AEC07595.1"/>
    <property type="molecule type" value="Genomic_DNA"/>
</dbReference>
<dbReference type="EMBL" id="AK117883">
    <property type="protein sequence ID" value="BAC42523.1"/>
    <property type="molecule type" value="mRNA"/>
</dbReference>
<dbReference type="EMBL" id="BT005216">
    <property type="protein sequence ID" value="AAO63280.1"/>
    <property type="molecule type" value="mRNA"/>
</dbReference>
<dbReference type="PIR" id="E84638">
    <property type="entry name" value="E84638"/>
</dbReference>
<dbReference type="RefSeq" id="NP_180035.1">
    <property type="nucleotide sequence ID" value="NM_128020.4"/>
</dbReference>
<dbReference type="SMR" id="Q9SJA6"/>
<dbReference type="BioGRID" id="2347">
    <property type="interactions" value="15"/>
</dbReference>
<dbReference type="FunCoup" id="Q9SJA6">
    <property type="interactions" value="3800"/>
</dbReference>
<dbReference type="IntAct" id="Q9SJA6">
    <property type="interactions" value="13"/>
</dbReference>
<dbReference type="STRING" id="3702.Q9SJA6"/>
<dbReference type="iPTMnet" id="Q9SJA6"/>
<dbReference type="PaxDb" id="3702-AT2G24590.1"/>
<dbReference type="ProteomicsDB" id="226681"/>
<dbReference type="EnsemblPlants" id="AT2G24590.1">
    <property type="protein sequence ID" value="AT2G24590.1"/>
    <property type="gene ID" value="AT2G24590"/>
</dbReference>
<dbReference type="GeneID" id="816995"/>
<dbReference type="Gramene" id="AT2G24590.1">
    <property type="protein sequence ID" value="AT2G24590.1"/>
    <property type="gene ID" value="AT2G24590"/>
</dbReference>
<dbReference type="KEGG" id="ath:AT2G24590"/>
<dbReference type="Araport" id="AT2G24590"/>
<dbReference type="TAIR" id="AT2G24590">
    <property type="gene designation" value="RSZ22A"/>
</dbReference>
<dbReference type="eggNOG" id="KOG0107">
    <property type="taxonomic scope" value="Eukaryota"/>
</dbReference>
<dbReference type="HOGENOM" id="CLU_012062_20_1_1"/>
<dbReference type="InParanoid" id="Q9SJA6"/>
<dbReference type="OMA" id="CYECGMR"/>
<dbReference type="PhylomeDB" id="Q9SJA6"/>
<dbReference type="CD-CODE" id="4299E36E">
    <property type="entry name" value="Nucleolus"/>
</dbReference>
<dbReference type="PRO" id="PR:Q9SJA6"/>
<dbReference type="Proteomes" id="UP000006548">
    <property type="component" value="Chromosome 2"/>
</dbReference>
<dbReference type="ExpressionAtlas" id="Q9SJA6">
    <property type="expression patterns" value="baseline and differential"/>
</dbReference>
<dbReference type="GO" id="GO:0005730">
    <property type="term" value="C:nucleolus"/>
    <property type="evidence" value="ECO:0007005"/>
    <property type="project" value="TAIR"/>
</dbReference>
<dbReference type="GO" id="GO:0005681">
    <property type="term" value="C:spliceosomal complex"/>
    <property type="evidence" value="ECO:0007669"/>
    <property type="project" value="UniProtKB-KW"/>
</dbReference>
<dbReference type="GO" id="GO:0005773">
    <property type="term" value="C:vacuole"/>
    <property type="evidence" value="ECO:0007005"/>
    <property type="project" value="TAIR"/>
</dbReference>
<dbReference type="GO" id="GO:0003729">
    <property type="term" value="F:mRNA binding"/>
    <property type="evidence" value="ECO:0000314"/>
    <property type="project" value="TAIR"/>
</dbReference>
<dbReference type="GO" id="GO:0008270">
    <property type="term" value="F:zinc ion binding"/>
    <property type="evidence" value="ECO:0007669"/>
    <property type="project" value="UniProtKB-KW"/>
</dbReference>
<dbReference type="GO" id="GO:0006397">
    <property type="term" value="P:mRNA processing"/>
    <property type="evidence" value="ECO:0007669"/>
    <property type="project" value="UniProtKB-KW"/>
</dbReference>
<dbReference type="GO" id="GO:0008380">
    <property type="term" value="P:RNA splicing"/>
    <property type="evidence" value="ECO:0000303"/>
    <property type="project" value="TAIR"/>
</dbReference>
<dbReference type="CDD" id="cd12373">
    <property type="entry name" value="RRM_SRSF3_like"/>
    <property type="match status" value="1"/>
</dbReference>
<dbReference type="FunFam" id="3.30.70.330:FF:000521">
    <property type="entry name" value="serine/arginine-rich splicing factor RSZ22-like"/>
    <property type="match status" value="1"/>
</dbReference>
<dbReference type="FunFam" id="4.10.60.10:FF:000029">
    <property type="entry name" value="Serine/arginine-rich splicing factor RSZ22A"/>
    <property type="match status" value="1"/>
</dbReference>
<dbReference type="Gene3D" id="3.30.70.330">
    <property type="match status" value="1"/>
</dbReference>
<dbReference type="Gene3D" id="4.10.60.10">
    <property type="entry name" value="Zinc finger, CCHC-type"/>
    <property type="match status" value="1"/>
</dbReference>
<dbReference type="InterPro" id="IPR012677">
    <property type="entry name" value="Nucleotide-bd_a/b_plait_sf"/>
</dbReference>
<dbReference type="InterPro" id="IPR035979">
    <property type="entry name" value="RBD_domain_sf"/>
</dbReference>
<dbReference type="InterPro" id="IPR000504">
    <property type="entry name" value="RRM_dom"/>
</dbReference>
<dbReference type="InterPro" id="IPR050907">
    <property type="entry name" value="SRSF"/>
</dbReference>
<dbReference type="InterPro" id="IPR001878">
    <property type="entry name" value="Znf_CCHC"/>
</dbReference>
<dbReference type="InterPro" id="IPR036875">
    <property type="entry name" value="Znf_CCHC_sf"/>
</dbReference>
<dbReference type="PANTHER" id="PTHR23147">
    <property type="entry name" value="SERINE/ARGININE RICH SPLICING FACTOR"/>
    <property type="match status" value="1"/>
</dbReference>
<dbReference type="Pfam" id="PF00076">
    <property type="entry name" value="RRM_1"/>
    <property type="match status" value="1"/>
</dbReference>
<dbReference type="Pfam" id="PF00098">
    <property type="entry name" value="zf-CCHC"/>
    <property type="match status" value="1"/>
</dbReference>
<dbReference type="SMART" id="SM00360">
    <property type="entry name" value="RRM"/>
    <property type="match status" value="1"/>
</dbReference>
<dbReference type="SMART" id="SM00343">
    <property type="entry name" value="ZnF_C2HC"/>
    <property type="match status" value="1"/>
</dbReference>
<dbReference type="SUPFAM" id="SSF57756">
    <property type="entry name" value="Retrovirus zinc finger-like domains"/>
    <property type="match status" value="1"/>
</dbReference>
<dbReference type="SUPFAM" id="SSF54928">
    <property type="entry name" value="RNA-binding domain, RBD"/>
    <property type="match status" value="1"/>
</dbReference>
<dbReference type="PROSITE" id="PS50102">
    <property type="entry name" value="RRM"/>
    <property type="match status" value="1"/>
</dbReference>
<dbReference type="PROSITE" id="PS50158">
    <property type="entry name" value="ZF_CCHC"/>
    <property type="match status" value="1"/>
</dbReference>
<gene>
    <name type="primary">RSZ22A</name>
    <name type="synonym">RSZP22A</name>
    <name type="ordered locus">At2g24590</name>
    <name type="ORF">F25P17.11</name>
</gene>
<organism>
    <name type="scientific">Arabidopsis thaliana</name>
    <name type="common">Mouse-ear cress</name>
    <dbReference type="NCBI Taxonomy" id="3702"/>
    <lineage>
        <taxon>Eukaryota</taxon>
        <taxon>Viridiplantae</taxon>
        <taxon>Streptophyta</taxon>
        <taxon>Embryophyta</taxon>
        <taxon>Tracheophyta</taxon>
        <taxon>Spermatophyta</taxon>
        <taxon>Magnoliopsida</taxon>
        <taxon>eudicotyledons</taxon>
        <taxon>Gunneridae</taxon>
        <taxon>Pentapetalae</taxon>
        <taxon>rosids</taxon>
        <taxon>malvids</taxon>
        <taxon>Brassicales</taxon>
        <taxon>Brassicaceae</taxon>
        <taxon>Camelineae</taxon>
        <taxon>Arabidopsis</taxon>
    </lineage>
</organism>
<protein>
    <recommendedName>
        <fullName>Serine/arginine-rich splicing factor RSZ22A</fullName>
    </recommendedName>
    <alternativeName>
        <fullName>RS-containing zinc finger protein 22A</fullName>
        <shortName>At-RSZ22a</shortName>
        <shortName>At-RSZp22a</shortName>
        <shortName>AtRSZ22a</shortName>
    </alternativeName>
</protein>